<feature type="signal peptide" evidence="1">
    <location>
        <begin position="1"/>
        <end position="22"/>
    </location>
</feature>
<feature type="propeptide" id="PRO_0000439462" evidence="5">
    <location>
        <begin position="23"/>
        <end position="43"/>
    </location>
</feature>
<feature type="peptide" id="PRO_0000439463" description="Cruzioseptin-2" evidence="2">
    <location>
        <begin position="46"/>
        <end position="68"/>
    </location>
</feature>
<feature type="propeptide" id="PRO_0000439464" evidence="5">
    <location>
        <begin position="70"/>
        <end position="71"/>
    </location>
</feature>
<feature type="modified residue" description="Glutamine amide" evidence="5">
    <location>
        <position position="68"/>
    </location>
</feature>
<reference evidence="6" key="1">
    <citation type="journal article" date="2016" name="J. Proteomics">
        <title>Peptidomic approach identifies cruzioseptins, a new family of potent antimicrobial peptides in the splendid leaf frog, Cruziohyla calcarifer.</title>
        <authorList>
            <person name="Proano-Bolanos C."/>
            <person name="Zhou M."/>
            <person name="Wang L."/>
            <person name="Coloma L.A."/>
            <person name="Chen T."/>
            <person name="Shaw C."/>
        </authorList>
    </citation>
    <scope>NUCLEOTIDE SEQUENCE [MRNA]</scope>
    <scope>FUNCTION</scope>
    <scope>SYNTHESIS</scope>
    <scope>SUBCELLULAR LOCATION</scope>
    <scope>AMIDATION AT GLN-68</scope>
    <scope>MASS SPECTROMETRY</scope>
    <scope>IDENTIFICATION BY MASS SPECTROMETRY</scope>
    <source>
        <tissue evidence="6">Skin secretion</tissue>
    </source>
</reference>
<name>CZS2_CRUCA</name>
<protein>
    <recommendedName>
        <fullName evidence="3">Cruzioseptin-2</fullName>
        <shortName evidence="3">CZS-2</shortName>
    </recommendedName>
</protein>
<sequence length="71" mass="8060">MAFLKKSLFLVLFLGLVSLSICEEEKREEENEEVQEDDDQSEEKRGFLDVIKHVGKAALGVVTHLINQGEQ</sequence>
<keyword id="KW-0027">Amidation</keyword>
<keyword id="KW-0878">Amphibian defense peptide</keyword>
<keyword id="KW-0044">Antibiotic</keyword>
<keyword id="KW-0929">Antimicrobial</keyword>
<keyword id="KW-0165">Cleavage on pair of basic residues</keyword>
<keyword id="KW-0295">Fungicide</keyword>
<keyword id="KW-0348">Hemagglutinin</keyword>
<keyword id="KW-0964">Secreted</keyword>
<keyword id="KW-0732">Signal</keyword>
<evidence type="ECO:0000255" key="1"/>
<evidence type="ECO:0000269" key="2">
    <source>
    </source>
</evidence>
<evidence type="ECO:0000303" key="3">
    <source>
    </source>
</evidence>
<evidence type="ECO:0000305" key="4"/>
<evidence type="ECO:0000305" key="5">
    <source>
    </source>
</evidence>
<evidence type="ECO:0000312" key="6">
    <source>
        <dbReference type="EMBL" id="ANN87759.1"/>
    </source>
</evidence>
<comment type="function">
    <text evidence="2">Has antimicrobial activity against Gram-negative bacterium E.coli (MIC=26.35 uM), against Gram-positive bacterium S.aureus (MIC=6.59 uM) and against fungus C.albicans (MIC=13.18 uM). At higher concentrations also has a bactericidal and fungicidal effect. Has hemagglutinating activity against horse erythrocytes.</text>
</comment>
<comment type="subcellular location">
    <subcellularLocation>
        <location evidence="2">Secreted</location>
    </subcellularLocation>
</comment>
<comment type="tissue specificity">
    <text evidence="5">Expressed by the skin glands.</text>
</comment>
<comment type="mass spectrometry" mass="2428.4" method="Electrospray" evidence="2"/>
<comment type="similarity">
    <text evidence="4">Belongs to the frog skin active peptide (FSAP) family. Cruzioseptin subfamily.</text>
</comment>
<comment type="online information" name="The antimicrobial peptide database">
    <link uri="https://wangapd3.com/database/query_output.php?ID=02714"/>
</comment>
<organism evidence="6">
    <name type="scientific">Cruziohyla calcarifer</name>
    <name type="common">Splendid leaf frog</name>
    <name type="synonym">Agalychnis calcarifer</name>
    <dbReference type="NCBI Taxonomy" id="318249"/>
    <lineage>
        <taxon>Eukaryota</taxon>
        <taxon>Metazoa</taxon>
        <taxon>Chordata</taxon>
        <taxon>Craniata</taxon>
        <taxon>Vertebrata</taxon>
        <taxon>Euteleostomi</taxon>
        <taxon>Amphibia</taxon>
        <taxon>Batrachia</taxon>
        <taxon>Anura</taxon>
        <taxon>Neobatrachia</taxon>
        <taxon>Hyloidea</taxon>
        <taxon>Hylidae</taxon>
        <taxon>Phyllomedusinae</taxon>
        <taxon>Cruziohyla</taxon>
    </lineage>
</organism>
<dbReference type="EMBL" id="KX065079">
    <property type="protein sequence ID" value="ANN87759.1"/>
    <property type="molecule type" value="mRNA"/>
</dbReference>
<dbReference type="GO" id="GO:0005576">
    <property type="term" value="C:extracellular region"/>
    <property type="evidence" value="ECO:0007669"/>
    <property type="project" value="UniProtKB-SubCell"/>
</dbReference>
<dbReference type="GO" id="GO:0042742">
    <property type="term" value="P:defense response to bacterium"/>
    <property type="evidence" value="ECO:0007669"/>
    <property type="project" value="UniProtKB-KW"/>
</dbReference>
<dbReference type="GO" id="GO:0050832">
    <property type="term" value="P:defense response to fungus"/>
    <property type="evidence" value="ECO:0007669"/>
    <property type="project" value="UniProtKB-KW"/>
</dbReference>
<dbReference type="GO" id="GO:0031640">
    <property type="term" value="P:killing of cells of another organism"/>
    <property type="evidence" value="ECO:0007669"/>
    <property type="project" value="UniProtKB-KW"/>
</dbReference>
<dbReference type="InterPro" id="IPR004275">
    <property type="entry name" value="Frog_antimicrobial_propeptide"/>
</dbReference>
<dbReference type="InterPro" id="IPR016322">
    <property type="entry name" value="FSAP"/>
</dbReference>
<dbReference type="Pfam" id="PF03032">
    <property type="entry name" value="FSAP_sig_propep"/>
    <property type="match status" value="1"/>
</dbReference>
<dbReference type="PIRSF" id="PIRSF001822">
    <property type="entry name" value="Dermaseptin_precursor"/>
    <property type="match status" value="1"/>
</dbReference>
<proteinExistence type="evidence at protein level"/>
<accession>A0A193H362</accession>